<dbReference type="EC" id="1.-.-.-" evidence="6"/>
<dbReference type="EMBL" id="DS027052">
    <property type="protein sequence ID" value="EAW11664.1"/>
    <property type="molecule type" value="Genomic_DNA"/>
</dbReference>
<dbReference type="RefSeq" id="XP_001273090.1">
    <property type="nucleotide sequence ID" value="XM_001273089.1"/>
</dbReference>
<dbReference type="SMR" id="A1CFL5"/>
<dbReference type="STRING" id="344612.A1CFL5"/>
<dbReference type="GlyCosmos" id="A1CFL5">
    <property type="glycosylation" value="2 sites, No reported glycans"/>
</dbReference>
<dbReference type="EnsemblFungi" id="EAW11664">
    <property type="protein sequence ID" value="EAW11664"/>
    <property type="gene ID" value="ACLA_093630"/>
</dbReference>
<dbReference type="GeneID" id="4704852"/>
<dbReference type="KEGG" id="act:ACLA_093630"/>
<dbReference type="VEuPathDB" id="FungiDB:ACLA_093630"/>
<dbReference type="eggNOG" id="KOG0156">
    <property type="taxonomic scope" value="Eukaryota"/>
</dbReference>
<dbReference type="HOGENOM" id="CLU_001570_2_1_1"/>
<dbReference type="OMA" id="QIRLGNC"/>
<dbReference type="OrthoDB" id="1103324at2759"/>
<dbReference type="UniPathway" id="UPA00918"/>
<dbReference type="Proteomes" id="UP000006701">
    <property type="component" value="Unassembled WGS sequence"/>
</dbReference>
<dbReference type="GO" id="GO:0005783">
    <property type="term" value="C:endoplasmic reticulum"/>
    <property type="evidence" value="ECO:0000250"/>
    <property type="project" value="GO_Central"/>
</dbReference>
<dbReference type="GO" id="GO:0005789">
    <property type="term" value="C:endoplasmic reticulum membrane"/>
    <property type="evidence" value="ECO:0007669"/>
    <property type="project" value="UniProtKB-SubCell"/>
</dbReference>
<dbReference type="GO" id="GO:0020037">
    <property type="term" value="F:heme binding"/>
    <property type="evidence" value="ECO:0007669"/>
    <property type="project" value="InterPro"/>
</dbReference>
<dbReference type="GO" id="GO:0005506">
    <property type="term" value="F:iron ion binding"/>
    <property type="evidence" value="ECO:0007669"/>
    <property type="project" value="InterPro"/>
</dbReference>
<dbReference type="GO" id="GO:0004497">
    <property type="term" value="F:monooxygenase activity"/>
    <property type="evidence" value="ECO:0000314"/>
    <property type="project" value="GO_Central"/>
</dbReference>
<dbReference type="GO" id="GO:0016705">
    <property type="term" value="F:oxidoreductase activity, acting on paired donors, with incorporation or reduction of molecular oxygen"/>
    <property type="evidence" value="ECO:0007669"/>
    <property type="project" value="InterPro"/>
</dbReference>
<dbReference type="GO" id="GO:0140723">
    <property type="term" value="P:patulin biosynthetic process"/>
    <property type="evidence" value="ECO:0000314"/>
    <property type="project" value="GO_Central"/>
</dbReference>
<dbReference type="CDD" id="cd11065">
    <property type="entry name" value="CYP64-like"/>
    <property type="match status" value="1"/>
</dbReference>
<dbReference type="Gene3D" id="1.10.630.10">
    <property type="entry name" value="Cytochrome P450"/>
    <property type="match status" value="1"/>
</dbReference>
<dbReference type="InterPro" id="IPR001128">
    <property type="entry name" value="Cyt_P450"/>
</dbReference>
<dbReference type="InterPro" id="IPR002401">
    <property type="entry name" value="Cyt_P450_E_grp-I"/>
</dbReference>
<dbReference type="InterPro" id="IPR036396">
    <property type="entry name" value="Cyt_P450_sf"/>
</dbReference>
<dbReference type="InterPro" id="IPR050364">
    <property type="entry name" value="Cytochrome_P450_fung"/>
</dbReference>
<dbReference type="PANTHER" id="PTHR46300:SF2">
    <property type="entry name" value="CYTOCHROME P450 MONOOXYGENASE ALNH-RELATED"/>
    <property type="match status" value="1"/>
</dbReference>
<dbReference type="PANTHER" id="PTHR46300">
    <property type="entry name" value="P450, PUTATIVE (EUROFUNG)-RELATED-RELATED"/>
    <property type="match status" value="1"/>
</dbReference>
<dbReference type="Pfam" id="PF00067">
    <property type="entry name" value="p450"/>
    <property type="match status" value="1"/>
</dbReference>
<dbReference type="PRINTS" id="PR00463">
    <property type="entry name" value="EP450I"/>
</dbReference>
<dbReference type="SUPFAM" id="SSF48264">
    <property type="entry name" value="Cytochrome P450"/>
    <property type="match status" value="1"/>
</dbReference>
<reference key="1">
    <citation type="journal article" date="2008" name="PLoS Genet.">
        <title>Genomic islands in the pathogenic filamentous fungus Aspergillus fumigatus.</title>
        <authorList>
            <person name="Fedorova N.D."/>
            <person name="Khaldi N."/>
            <person name="Joardar V.S."/>
            <person name="Maiti R."/>
            <person name="Amedeo P."/>
            <person name="Anderson M.J."/>
            <person name="Crabtree J."/>
            <person name="Silva J.C."/>
            <person name="Badger J.H."/>
            <person name="Albarraq A."/>
            <person name="Angiuoli S."/>
            <person name="Bussey H."/>
            <person name="Bowyer P."/>
            <person name="Cotty P.J."/>
            <person name="Dyer P.S."/>
            <person name="Egan A."/>
            <person name="Galens K."/>
            <person name="Fraser-Liggett C.M."/>
            <person name="Haas B.J."/>
            <person name="Inman J.M."/>
            <person name="Kent R."/>
            <person name="Lemieux S."/>
            <person name="Malavazi I."/>
            <person name="Orvis J."/>
            <person name="Roemer T."/>
            <person name="Ronning C.M."/>
            <person name="Sundaram J.P."/>
            <person name="Sutton G."/>
            <person name="Turner G."/>
            <person name="Venter J.C."/>
            <person name="White O.R."/>
            <person name="Whitty B.R."/>
            <person name="Youngman P."/>
            <person name="Wolfe K.H."/>
            <person name="Goldman G.H."/>
            <person name="Wortman J.R."/>
            <person name="Jiang B."/>
            <person name="Denning D.W."/>
            <person name="Nierman W.C."/>
        </authorList>
    </citation>
    <scope>NUCLEOTIDE SEQUENCE [LARGE SCALE GENOMIC DNA]</scope>
    <source>
        <strain>ATCC 1007 / CBS 513.65 / DSM 816 / NCTC 3887 / NRRL 1 / QM 1276 / 107</strain>
    </source>
</reference>
<reference key="2">
    <citation type="journal article" date="2004" name="Int. J. Epidemiol.">
        <title>Clinical trial of patulin in the common cold. 1944.</title>
        <authorList>
            <consortium name="Patulin Clinical Trials Committee, Medical Research Council"/>
        </authorList>
    </citation>
    <scope>BIOTECHNOLOGY</scope>
</reference>
<reference key="3">
    <citation type="journal article" date="2009" name="Microbiology">
        <title>Molecular cloning and functional characterization of two CYP619 cytochrome P450s involved in biosynthesis of patulin in Aspergillus clavatus.</title>
        <authorList>
            <person name="Artigot M.P."/>
            <person name="Loiseau N."/>
            <person name="Laffitte J."/>
            <person name="Mas-Reguieg L."/>
            <person name="Tadrist S."/>
            <person name="Oswald I.P."/>
            <person name="Puel O."/>
        </authorList>
    </citation>
    <scope>FUNCTION</scope>
    <scope>CATALYTIC ACTIVITY</scope>
</reference>
<reference key="4">
    <citation type="journal article" date="2012" name="Food Chem. Toxicol.">
        <title>DNA damage in organs of mice treated acutely with patulin, a known mycotoxin.</title>
        <authorList>
            <person name="de Melo F.T."/>
            <person name="de Oliveira I.M."/>
            <person name="Greggio S."/>
            <person name="Dacosta J.C."/>
            <person name="Guecheva T.N."/>
            <person name="Saffi J."/>
            <person name="Henriques J.A."/>
            <person name="Rosa R.M."/>
        </authorList>
    </citation>
    <scope>BIOTECHNOLOGY</scope>
</reference>
<reference key="5">
    <citation type="journal article" date="2016" name="Tumor Biol.">
        <title>The potential effect of patulin on mice bearing melanoma cells: an anti-tumour or carcinogenic effect?</title>
        <authorList>
            <person name="Boussabbeh M."/>
            <person name="Ben Salem I."/>
            <person name="Rjiba-Touati K."/>
            <person name="Bouyahya C."/>
            <person name="Neffati F."/>
            <person name="Najjar M.F."/>
            <person name="Bacha H."/>
            <person name="Abid-Essefi S."/>
        </authorList>
    </citation>
    <scope>BIOTECHNOLOGY</scope>
</reference>
<evidence type="ECO:0000250" key="1">
    <source>
        <dbReference type="UniProtKB" id="A0A075TRL5"/>
    </source>
</evidence>
<evidence type="ECO:0000250" key="2">
    <source>
        <dbReference type="UniProtKB" id="P04798"/>
    </source>
</evidence>
<evidence type="ECO:0000255" key="3"/>
<evidence type="ECO:0000255" key="4">
    <source>
        <dbReference type="PROSITE-ProRule" id="PRU00498"/>
    </source>
</evidence>
<evidence type="ECO:0000269" key="5">
    <source>
    </source>
</evidence>
<evidence type="ECO:0000269" key="6">
    <source>
    </source>
</evidence>
<evidence type="ECO:0000269" key="7">
    <source>
    </source>
</evidence>
<evidence type="ECO:0000269" key="8">
    <source>
    </source>
</evidence>
<evidence type="ECO:0000303" key="9">
    <source>
    </source>
</evidence>
<evidence type="ECO:0000305" key="10"/>
<evidence type="ECO:0000305" key="11">
    <source>
    </source>
</evidence>
<organism>
    <name type="scientific">Aspergillus clavatus (strain ATCC 1007 / CBS 513.65 / DSM 816 / NCTC 3887 / NRRL 1 / QM 1276 / 107)</name>
    <dbReference type="NCBI Taxonomy" id="344612"/>
    <lineage>
        <taxon>Eukaryota</taxon>
        <taxon>Fungi</taxon>
        <taxon>Dikarya</taxon>
        <taxon>Ascomycota</taxon>
        <taxon>Pezizomycotina</taxon>
        <taxon>Eurotiomycetes</taxon>
        <taxon>Eurotiomycetidae</taxon>
        <taxon>Eurotiales</taxon>
        <taxon>Aspergillaceae</taxon>
        <taxon>Aspergillus</taxon>
        <taxon>Aspergillus subgen. Fumigati</taxon>
    </lineage>
</organism>
<comment type="function">
    <text evidence="6 11">Cytochrome P450 monooxygenase; part of the gene cluster that mediates the biosynthesis of patulin, an acetate-derived tetraketide mycotoxin produced by several fungal species that shows antimicrobial properties against several bacteria (PubMed:19383676). PatH catalyzes the conversion of m-cresol into m-hydroxybenzyl alcohol (PubMed:19383676). The pathway begins with the synthesis of 6-methylsalicylic acid by the polyketide synthase (PKS) patK via condensation of acetate and malonate units. The 6-methylsalicylic acid decarboxylase patG then catalyzes the decarboxylation of 6-methylsalicylic acid to yield m-cresol (also known as 3-methylphenol). These first reactions occur in the cytosol. The intermediate m-cresol is then transported into the endoplasmic reticulum where the cytochrome P450 monooxygenase patH converts it to m-hydroxybenzyl alcohol, which is further converted to gentisyl alcohol by the cytochrome P450 monooxygenase patI. The oxidoreductases patJ and patO further convert gentisyl alcohol to isoepoxydon in the vacuole. PatN catalyzes then the transformation of isoepoxydon into phyllostine. The cluster protein patF is responsible for the conversion from phyllostine to neopatulin whereas the alcohol dehydrogenase patD converts neopatulin to E-ascladiol. The steps between isoepoxydon and E-ascladiol occur in the cytosol, and E-ascladiol is probably secreted to the extracellular space by one of the cluster-specific transporters patC or patM. Finally, the secreted patulin synthase patE catalyzes the conversion of E-ascladiol to patulin (Probable) (PubMed:19383676).</text>
</comment>
<comment type="catalytic activity">
    <reaction evidence="6">
        <text>3-methylphenol + reduced [NADPH--hemoprotein reductase] + O2 = 3-hydroxybenzyl alcohol + oxidized [NADPH--hemoprotein reductase] + H2O + H(+)</text>
        <dbReference type="Rhea" id="RHEA:62208"/>
        <dbReference type="Rhea" id="RHEA-COMP:11964"/>
        <dbReference type="Rhea" id="RHEA-COMP:11965"/>
        <dbReference type="ChEBI" id="CHEBI:15377"/>
        <dbReference type="ChEBI" id="CHEBI:15378"/>
        <dbReference type="ChEBI" id="CHEBI:15379"/>
        <dbReference type="ChEBI" id="CHEBI:17069"/>
        <dbReference type="ChEBI" id="CHEBI:17231"/>
        <dbReference type="ChEBI" id="CHEBI:57618"/>
        <dbReference type="ChEBI" id="CHEBI:58210"/>
    </reaction>
    <physiologicalReaction direction="left-to-right" evidence="6">
        <dbReference type="Rhea" id="RHEA:62209"/>
    </physiologicalReaction>
</comment>
<comment type="cofactor">
    <cofactor evidence="2">
        <name>heme</name>
        <dbReference type="ChEBI" id="CHEBI:30413"/>
    </cofactor>
</comment>
<comment type="pathway">
    <text evidence="6">Mycotoxin biosynthesis; patulin biosynthesis.</text>
</comment>
<comment type="subcellular location">
    <subcellularLocation>
        <location evidence="1">Endoplasmic reticulum membrane</location>
        <topology evidence="3">Single-pass membrane protein</topology>
    </subcellularLocation>
</comment>
<comment type="biotechnology">
    <text evidence="5 7 8">Patulin was originally used as an antibiotic and specifically trialed to be used against the common cold, but it is no longer used for that purpose since it has been shown to induce immunological, neurological and gastrointestinal effects (PubMed:15082620). Genotoxic effects of patulin with dose-dependent increase in DNA strand breaks in brain, liver and kidneys have been detected in mice (PubMed:22222931). However, more recently, it has been proposed that patulin might also have anti-tumor properties (PubMed:26619846).</text>
</comment>
<comment type="similarity">
    <text evidence="10">Belongs to the cytochrome P450 family.</text>
</comment>
<feature type="chain" id="PRO_0000437115" description="Cytochrome P450 monooxygenase patH" evidence="3">
    <location>
        <begin position="1"/>
        <end position="524"/>
    </location>
</feature>
<feature type="topological domain" description="Cytoplasmic" evidence="10">
    <location>
        <begin position="1"/>
        <end position="4"/>
    </location>
</feature>
<feature type="transmembrane region" description="Helical" evidence="3">
    <location>
        <begin position="5"/>
        <end position="23"/>
    </location>
</feature>
<feature type="topological domain" description="Lumenal" evidence="10">
    <location>
        <begin position="24"/>
        <end position="524"/>
    </location>
</feature>
<feature type="binding site" description="axial binding residue" evidence="2">
    <location>
        <position position="442"/>
    </location>
    <ligand>
        <name>heme</name>
        <dbReference type="ChEBI" id="CHEBI:30413"/>
    </ligand>
    <ligandPart>
        <name>Fe</name>
        <dbReference type="ChEBI" id="CHEBI:18248"/>
    </ligandPart>
</feature>
<feature type="glycosylation site" description="N-linked (GlcNAc...) asparagine" evidence="4">
    <location>
        <position position="191"/>
    </location>
</feature>
<feature type="glycosylation site" description="N-linked (GlcNAc...) asparagine" evidence="4">
    <location>
        <position position="499"/>
    </location>
</feature>
<sequence>MEPMLLLILVAAVVLLFVRWAFVYGHRTSNMPKGPPTLPFIGNIHQIPTQYTHIKFTEWAAKYGGLYMLKVGNGNMAVVTDRRLVKEVVDRKSGIYSHRPHSFVSHELITKGNHLLVMHYGDQWRTFRRLIHQHLMESMVDSQHVKIVNAEAIQLVRDYLVDPEHHMAHPKRFSNSITNSIVFGIRTADRNGSNMKRLYKLMEEWSEIMETGATPPVDLFPWMKMLPQWMFSNYVNRAKAIGVQMETLYTDILNKVIKRRNGGQNLGTFMDRVLDGQEKNDLPWHQLAFIGGVLMEGGSDTSSSLTIAIVQALILNPAVQKKAHAEIDAVVGSDRSPVWEDLEKLPYINMIIKEGHRWRPILPLCFPHALGEDDWVDGKLLPKGTVVVINTWGMHMDPSQPDDPAAFIPERYANHPQLAPEYAAGKWENRDHYGYGVGRRICPGIHLAERNMFLAIAKLLWAFEFQRGEGKIDSDPVTGYHNGFLYCAKDYPCRPVVRNKTIRATIEREFATATKEVFSQFTEG</sequence>
<protein>
    <recommendedName>
        <fullName evidence="9">Cytochrome P450 monooxygenase patH</fullName>
        <ecNumber evidence="6">1.-.-.-</ecNumber>
    </recommendedName>
    <alternativeName>
        <fullName evidence="9">Patulin synthesis protein H</fullName>
    </alternativeName>
    <alternativeName>
        <fullName evidence="9">m-cresol hydrolase</fullName>
    </alternativeName>
</protein>
<gene>
    <name evidence="9" type="primary">patH</name>
    <name evidence="9" type="synonym">CYP619C3</name>
    <name type="ORF">ACLA_093630</name>
</gene>
<accession>A1CFL5</accession>
<keyword id="KW-0256">Endoplasmic reticulum</keyword>
<keyword id="KW-0325">Glycoprotein</keyword>
<keyword id="KW-0349">Heme</keyword>
<keyword id="KW-0408">Iron</keyword>
<keyword id="KW-0472">Membrane</keyword>
<keyword id="KW-0479">Metal-binding</keyword>
<keyword id="KW-0503">Monooxygenase</keyword>
<keyword id="KW-0560">Oxidoreductase</keyword>
<keyword id="KW-1185">Reference proteome</keyword>
<keyword id="KW-0812">Transmembrane</keyword>
<keyword id="KW-1133">Transmembrane helix</keyword>
<proteinExistence type="evidence at protein level"/>
<name>PATH_ASPCL</name>